<proteinExistence type="inferred from homology"/>
<reference key="1">
    <citation type="journal article" date="2007" name="Appl. Environ. Microbiol.">
        <title>Genome sequence of the cellulolytic gliding bacterium Cytophaga hutchinsonii.</title>
        <authorList>
            <person name="Xie G."/>
            <person name="Bruce D.C."/>
            <person name="Challacombe J.F."/>
            <person name="Chertkov O."/>
            <person name="Detter J.C."/>
            <person name="Gilna P."/>
            <person name="Han C.S."/>
            <person name="Lucas S."/>
            <person name="Misra M."/>
            <person name="Myers G.L."/>
            <person name="Richardson P."/>
            <person name="Tapia R."/>
            <person name="Thayer N."/>
            <person name="Thompson L.S."/>
            <person name="Brettin T.S."/>
            <person name="Henrissat B."/>
            <person name="Wilson D.B."/>
            <person name="McBride M.J."/>
        </authorList>
    </citation>
    <scope>NUCLEOTIDE SEQUENCE [LARGE SCALE GENOMIC DNA]</scope>
    <source>
        <strain>ATCC 33406 / DSM 1761 / JCM 20678 / CIP 103989 / IAM 12607 / NBRC 15051 / NCIMB 9469 / D465</strain>
    </source>
</reference>
<feature type="chain" id="PRO_1000147296" description="Nucleotide-binding protein CHU_2278">
    <location>
        <begin position="1"/>
        <end position="162"/>
    </location>
</feature>
<gene>
    <name type="ordered locus">CHU_2278</name>
</gene>
<dbReference type="EMBL" id="CP000383">
    <property type="protein sequence ID" value="ABG59539.1"/>
    <property type="molecule type" value="Genomic_DNA"/>
</dbReference>
<dbReference type="RefSeq" id="WP_011585656.1">
    <property type="nucleotide sequence ID" value="NC_008255.1"/>
</dbReference>
<dbReference type="SMR" id="Q11SS5"/>
<dbReference type="STRING" id="269798.CHU_2278"/>
<dbReference type="KEGG" id="chu:CHU_2278"/>
<dbReference type="eggNOG" id="COG1666">
    <property type="taxonomic scope" value="Bacteria"/>
</dbReference>
<dbReference type="HOGENOM" id="CLU_099839_1_0_10"/>
<dbReference type="OrthoDB" id="9801447at2"/>
<dbReference type="Proteomes" id="UP000001822">
    <property type="component" value="Chromosome"/>
</dbReference>
<dbReference type="GO" id="GO:0005829">
    <property type="term" value="C:cytosol"/>
    <property type="evidence" value="ECO:0007669"/>
    <property type="project" value="TreeGrafter"/>
</dbReference>
<dbReference type="GO" id="GO:0000166">
    <property type="term" value="F:nucleotide binding"/>
    <property type="evidence" value="ECO:0007669"/>
    <property type="project" value="TreeGrafter"/>
</dbReference>
<dbReference type="CDD" id="cd11740">
    <property type="entry name" value="YajQ_like"/>
    <property type="match status" value="1"/>
</dbReference>
<dbReference type="Gene3D" id="3.30.70.860">
    <property type="match status" value="1"/>
</dbReference>
<dbReference type="Gene3D" id="3.30.70.990">
    <property type="entry name" value="YajQ-like, domain 2"/>
    <property type="match status" value="1"/>
</dbReference>
<dbReference type="HAMAP" id="MF_00632">
    <property type="entry name" value="YajQ"/>
    <property type="match status" value="1"/>
</dbReference>
<dbReference type="InterPro" id="IPR007551">
    <property type="entry name" value="DUF520"/>
</dbReference>
<dbReference type="InterPro" id="IPR035571">
    <property type="entry name" value="UPF0234-like_C"/>
</dbReference>
<dbReference type="InterPro" id="IPR035570">
    <property type="entry name" value="UPF0234_N"/>
</dbReference>
<dbReference type="InterPro" id="IPR036183">
    <property type="entry name" value="YajQ-like_sf"/>
</dbReference>
<dbReference type="NCBIfam" id="NF003819">
    <property type="entry name" value="PRK05412.1"/>
    <property type="match status" value="1"/>
</dbReference>
<dbReference type="PANTHER" id="PTHR30476">
    <property type="entry name" value="UPF0234 PROTEIN YAJQ"/>
    <property type="match status" value="1"/>
</dbReference>
<dbReference type="PANTHER" id="PTHR30476:SF0">
    <property type="entry name" value="UPF0234 PROTEIN YAJQ"/>
    <property type="match status" value="1"/>
</dbReference>
<dbReference type="Pfam" id="PF04461">
    <property type="entry name" value="DUF520"/>
    <property type="match status" value="1"/>
</dbReference>
<dbReference type="SUPFAM" id="SSF89963">
    <property type="entry name" value="YajQ-like"/>
    <property type="match status" value="2"/>
</dbReference>
<comment type="function">
    <text evidence="1">Nucleotide-binding protein.</text>
</comment>
<comment type="similarity">
    <text evidence="1">Belongs to the YajQ family.</text>
</comment>
<keyword id="KW-0547">Nucleotide-binding</keyword>
<keyword id="KW-1185">Reference proteome</keyword>
<name>Y2278_CYTH3</name>
<accession>Q11SS5</accession>
<evidence type="ECO:0000255" key="1">
    <source>
        <dbReference type="HAMAP-Rule" id="MF_00632"/>
    </source>
</evidence>
<sequence>MPSFDIVSKVDPQTLDNALNVARKEITTRYDFRDSKTEIDLDKKASIIKVTTENSMRMNAIVDIVITRMAKQGIDAKALDMSKEEYASGPMVKRELPVKNGIDKESCKKIIKIIKDSGSKVTPAQMDDLIRVTGKKIDDLQEIIALLRSKDVGVALQFINMK</sequence>
<protein>
    <recommendedName>
        <fullName evidence="1">Nucleotide-binding protein CHU_2278</fullName>
    </recommendedName>
</protein>
<organism>
    <name type="scientific">Cytophaga hutchinsonii (strain ATCC 33406 / DSM 1761 / CIP 103989 / NBRC 15051 / NCIMB 9469 / D465)</name>
    <dbReference type="NCBI Taxonomy" id="269798"/>
    <lineage>
        <taxon>Bacteria</taxon>
        <taxon>Pseudomonadati</taxon>
        <taxon>Bacteroidota</taxon>
        <taxon>Cytophagia</taxon>
        <taxon>Cytophagales</taxon>
        <taxon>Cytophagaceae</taxon>
        <taxon>Cytophaga</taxon>
    </lineage>
</organism>